<keyword id="KW-0489">Methyltransferase</keyword>
<keyword id="KW-1185">Reference proteome</keyword>
<keyword id="KW-0949">S-adenosyl-L-methionine</keyword>
<keyword id="KW-0808">Transferase</keyword>
<keyword id="KW-0819">tRNA processing</keyword>
<gene>
    <name evidence="2" type="primary">trmB</name>
    <name type="ordered locus">BLi03141</name>
    <name type="ordered locus">BL00042</name>
</gene>
<accession>Q65G12</accession>
<accession>Q62RG7</accession>
<feature type="chain" id="PRO_0000229154" description="tRNA (guanine-N(7)-)-methyltransferase">
    <location>
        <begin position="1"/>
        <end position="213"/>
    </location>
</feature>
<feature type="region of interest" description="Interaction with RNA" evidence="2">
    <location>
        <begin position="124"/>
        <end position="129"/>
    </location>
</feature>
<feature type="active site" evidence="1">
    <location>
        <position position="118"/>
    </location>
</feature>
<feature type="binding site" evidence="2">
    <location>
        <position position="44"/>
    </location>
    <ligand>
        <name>S-adenosyl-L-methionine</name>
        <dbReference type="ChEBI" id="CHEBI:59789"/>
    </ligand>
</feature>
<feature type="binding site" evidence="2">
    <location>
        <position position="69"/>
    </location>
    <ligand>
        <name>S-adenosyl-L-methionine</name>
        <dbReference type="ChEBI" id="CHEBI:59789"/>
    </ligand>
</feature>
<feature type="binding site" evidence="2">
    <location>
        <position position="96"/>
    </location>
    <ligand>
        <name>S-adenosyl-L-methionine</name>
        <dbReference type="ChEBI" id="CHEBI:59789"/>
    </ligand>
</feature>
<feature type="binding site" evidence="2">
    <location>
        <position position="118"/>
    </location>
    <ligand>
        <name>S-adenosyl-L-methionine</name>
        <dbReference type="ChEBI" id="CHEBI:59789"/>
    </ligand>
</feature>
<feature type="binding site" evidence="2">
    <location>
        <position position="122"/>
    </location>
    <ligand>
        <name>substrate</name>
    </ligand>
</feature>
<feature type="binding site" evidence="2">
    <location>
        <position position="154"/>
    </location>
    <ligand>
        <name>substrate</name>
    </ligand>
</feature>
<feature type="binding site" evidence="2">
    <location>
        <begin position="191"/>
        <end position="194"/>
    </location>
    <ligand>
        <name>substrate</name>
    </ligand>
</feature>
<name>TRMB_BACLD</name>
<comment type="function">
    <text evidence="2">Catalyzes the formation of N(7)-methylguanine at position 46 (m7G46) in tRNA.</text>
</comment>
<comment type="catalytic activity">
    <reaction evidence="2">
        <text>guanosine(46) in tRNA + S-adenosyl-L-methionine = N(7)-methylguanosine(46) in tRNA + S-adenosyl-L-homocysteine</text>
        <dbReference type="Rhea" id="RHEA:42708"/>
        <dbReference type="Rhea" id="RHEA-COMP:10188"/>
        <dbReference type="Rhea" id="RHEA-COMP:10189"/>
        <dbReference type="ChEBI" id="CHEBI:57856"/>
        <dbReference type="ChEBI" id="CHEBI:59789"/>
        <dbReference type="ChEBI" id="CHEBI:74269"/>
        <dbReference type="ChEBI" id="CHEBI:74480"/>
        <dbReference type="EC" id="2.1.1.33"/>
    </reaction>
</comment>
<comment type="pathway">
    <text evidence="2">tRNA modification; N(7)-methylguanine-tRNA biosynthesis.</text>
</comment>
<comment type="similarity">
    <text evidence="2">Belongs to the class I-like SAM-binding methyltransferase superfamily. TrmB family.</text>
</comment>
<sequence>MRMRHKPWADDYLAENSHIVISEPSQYKGKWHSVFGNDNPIHIEVGTGKGQFISGMALQNPDVNYIGIELFKSVIVTAVDKVKQTEAPNVKLLNINANMLSDVFADGEVDRVYLNFSDPWPKKRHEKRRLTNHAFLKKYEQVLGGKGAIHFKTDNRGLFEYSLTSFSEYGLVLTFVSLDLHQSDFEGNVMTEYEEKFAAKGQPIYRVEAEWRT</sequence>
<dbReference type="EC" id="2.1.1.33" evidence="2"/>
<dbReference type="EMBL" id="AE017333">
    <property type="protein sequence ID" value="AAU42002.1"/>
    <property type="molecule type" value="Genomic_DNA"/>
</dbReference>
<dbReference type="EMBL" id="CP000002">
    <property type="protein sequence ID" value="AAU24643.1"/>
    <property type="molecule type" value="Genomic_DNA"/>
</dbReference>
<dbReference type="RefSeq" id="WP_003184473.1">
    <property type="nucleotide sequence ID" value="NC_006322.1"/>
</dbReference>
<dbReference type="SMR" id="Q65G12"/>
<dbReference type="STRING" id="279010.BL00042"/>
<dbReference type="GeneID" id="92860271"/>
<dbReference type="KEGG" id="bld:BLi03141"/>
<dbReference type="KEGG" id="bli:BL00042"/>
<dbReference type="eggNOG" id="COG0220">
    <property type="taxonomic scope" value="Bacteria"/>
</dbReference>
<dbReference type="HOGENOM" id="CLU_050910_2_1_9"/>
<dbReference type="UniPathway" id="UPA00989"/>
<dbReference type="Proteomes" id="UP000000606">
    <property type="component" value="Chromosome"/>
</dbReference>
<dbReference type="GO" id="GO:0043527">
    <property type="term" value="C:tRNA methyltransferase complex"/>
    <property type="evidence" value="ECO:0007669"/>
    <property type="project" value="TreeGrafter"/>
</dbReference>
<dbReference type="GO" id="GO:0008176">
    <property type="term" value="F:tRNA (guanine(46)-N7)-methyltransferase activity"/>
    <property type="evidence" value="ECO:0007669"/>
    <property type="project" value="UniProtKB-UniRule"/>
</dbReference>
<dbReference type="CDD" id="cd02440">
    <property type="entry name" value="AdoMet_MTases"/>
    <property type="match status" value="1"/>
</dbReference>
<dbReference type="FunFam" id="3.40.50.150:FF:000035">
    <property type="entry name" value="tRNA (guanine-N(7)-)-methyltransferase"/>
    <property type="match status" value="1"/>
</dbReference>
<dbReference type="Gene3D" id="3.40.50.150">
    <property type="entry name" value="Vaccinia Virus protein VP39"/>
    <property type="match status" value="1"/>
</dbReference>
<dbReference type="HAMAP" id="MF_01057">
    <property type="entry name" value="tRNA_methyltr_TrmB"/>
    <property type="match status" value="1"/>
</dbReference>
<dbReference type="InterPro" id="IPR029063">
    <property type="entry name" value="SAM-dependent_MTases_sf"/>
</dbReference>
<dbReference type="InterPro" id="IPR003358">
    <property type="entry name" value="tRNA_(Gua-N-7)_MeTrfase_Trmb"/>
</dbReference>
<dbReference type="InterPro" id="IPR055361">
    <property type="entry name" value="tRNA_methyltr_TrmB_bact"/>
</dbReference>
<dbReference type="NCBIfam" id="NF001080">
    <property type="entry name" value="PRK00121.2-2"/>
    <property type="match status" value="1"/>
</dbReference>
<dbReference type="NCBIfam" id="TIGR00091">
    <property type="entry name" value="tRNA (guanosine(46)-N7)-methyltransferase TrmB"/>
    <property type="match status" value="1"/>
</dbReference>
<dbReference type="PANTHER" id="PTHR23417">
    <property type="entry name" value="3-DEOXY-D-MANNO-OCTULOSONIC-ACID TRANSFERASE/TRNA GUANINE-N 7 - -METHYLTRANSFERASE"/>
    <property type="match status" value="1"/>
</dbReference>
<dbReference type="PANTHER" id="PTHR23417:SF14">
    <property type="entry name" value="PENTACOTRIPEPTIDE-REPEAT REGION OF PRORP DOMAIN-CONTAINING PROTEIN"/>
    <property type="match status" value="1"/>
</dbReference>
<dbReference type="Pfam" id="PF02390">
    <property type="entry name" value="Methyltransf_4"/>
    <property type="match status" value="1"/>
</dbReference>
<dbReference type="SUPFAM" id="SSF53335">
    <property type="entry name" value="S-adenosyl-L-methionine-dependent methyltransferases"/>
    <property type="match status" value="1"/>
</dbReference>
<dbReference type="PROSITE" id="PS51625">
    <property type="entry name" value="SAM_MT_TRMB"/>
    <property type="match status" value="1"/>
</dbReference>
<evidence type="ECO:0000250" key="1"/>
<evidence type="ECO:0000255" key="2">
    <source>
        <dbReference type="HAMAP-Rule" id="MF_01057"/>
    </source>
</evidence>
<organism>
    <name type="scientific">Bacillus licheniformis (strain ATCC 14580 / DSM 13 / JCM 2505 / CCUG 7422 / NBRC 12200 / NCIMB 9375 / NCTC 10341 / NRRL NRS-1264 / Gibson 46)</name>
    <dbReference type="NCBI Taxonomy" id="279010"/>
    <lineage>
        <taxon>Bacteria</taxon>
        <taxon>Bacillati</taxon>
        <taxon>Bacillota</taxon>
        <taxon>Bacilli</taxon>
        <taxon>Bacillales</taxon>
        <taxon>Bacillaceae</taxon>
        <taxon>Bacillus</taxon>
    </lineage>
</organism>
<proteinExistence type="inferred from homology"/>
<protein>
    <recommendedName>
        <fullName evidence="2">tRNA (guanine-N(7)-)-methyltransferase</fullName>
        <ecNumber evidence="2">2.1.1.33</ecNumber>
    </recommendedName>
    <alternativeName>
        <fullName evidence="2">tRNA (guanine(46)-N(7))-methyltransferase</fullName>
    </alternativeName>
    <alternativeName>
        <fullName evidence="2">tRNA(m7G46)-methyltransferase</fullName>
    </alternativeName>
</protein>
<reference key="1">
    <citation type="journal article" date="2004" name="J. Mol. Microbiol. Biotechnol.">
        <title>The complete genome sequence of Bacillus licheniformis DSM13, an organism with great industrial potential.</title>
        <authorList>
            <person name="Veith B."/>
            <person name="Herzberg C."/>
            <person name="Steckel S."/>
            <person name="Feesche J."/>
            <person name="Maurer K.H."/>
            <person name="Ehrenreich P."/>
            <person name="Baeumer S."/>
            <person name="Henne A."/>
            <person name="Liesegang H."/>
            <person name="Merkl R."/>
            <person name="Ehrenreich A."/>
            <person name="Gottschalk G."/>
        </authorList>
    </citation>
    <scope>NUCLEOTIDE SEQUENCE [LARGE SCALE GENOMIC DNA]</scope>
    <source>
        <strain>ATCC 14580 / DSM 13 / JCM 2505 / CCUG 7422 / NBRC 12200 / NCIMB 9375 / NCTC 10341 / NRRL NRS-1264 / Gibson 46</strain>
    </source>
</reference>
<reference key="2">
    <citation type="journal article" date="2004" name="Genome Biol.">
        <title>Complete genome sequence of the industrial bacterium Bacillus licheniformis and comparisons with closely related Bacillus species.</title>
        <authorList>
            <person name="Rey M.W."/>
            <person name="Ramaiya P."/>
            <person name="Nelson B.A."/>
            <person name="Brody-Karpin S.D."/>
            <person name="Zaretsky E.J."/>
            <person name="Tang M."/>
            <person name="Lopez de Leon A."/>
            <person name="Xiang H."/>
            <person name="Gusti V."/>
            <person name="Clausen I.G."/>
            <person name="Olsen P.B."/>
            <person name="Rasmussen M.D."/>
            <person name="Andersen J.T."/>
            <person name="Joergensen P.L."/>
            <person name="Larsen T.S."/>
            <person name="Sorokin A."/>
            <person name="Bolotin A."/>
            <person name="Lapidus A."/>
            <person name="Galleron N."/>
            <person name="Ehrlich S.D."/>
            <person name="Berka R.M."/>
        </authorList>
    </citation>
    <scope>NUCLEOTIDE SEQUENCE [LARGE SCALE GENOMIC DNA]</scope>
    <source>
        <strain>ATCC 14580 / DSM 13 / JCM 2505 / CCUG 7422 / NBRC 12200 / NCIMB 9375 / NCTC 10341 / NRRL NRS-1264 / Gibson 46</strain>
    </source>
</reference>